<sequence length="163" mass="19223">MSQQEEMKNLTLLGSKETPYIFEYSPQVLESFDNRHADNDYFIKFNCPEFTSLCPITGQPDFASIYISYIPDQLCVESKSLKLYLFSYRNHGDFHENCINTIGKDLVELLNPRYLEVWGKFTPRGGISIDPYYNYGRPKTKYENMAEQRLFNHDLYPENIDNR</sequence>
<protein>
    <recommendedName>
        <fullName evidence="1">NADPH-dependent 7-cyano-7-deazaguanine reductase</fullName>
        <ecNumber evidence="1">1.7.1.13</ecNumber>
    </recommendedName>
    <alternativeName>
        <fullName evidence="1">7-cyano-7-carbaguanine reductase</fullName>
    </alternativeName>
    <alternativeName>
        <fullName evidence="1">NADPH-dependent nitrile oxidoreductase</fullName>
    </alternativeName>
    <alternativeName>
        <fullName evidence="1">PreQ(0) reductase</fullName>
    </alternativeName>
</protein>
<accession>Q5M4S2</accession>
<comment type="function">
    <text evidence="1">Catalyzes the NADPH-dependent reduction of 7-cyano-7-deazaguanine (preQ0) to 7-aminomethyl-7-deazaguanine (preQ1).</text>
</comment>
<comment type="catalytic activity">
    <reaction evidence="1">
        <text>7-aminomethyl-7-carbaguanine + 2 NADP(+) = 7-cyano-7-deazaguanine + 2 NADPH + 3 H(+)</text>
        <dbReference type="Rhea" id="RHEA:13409"/>
        <dbReference type="ChEBI" id="CHEBI:15378"/>
        <dbReference type="ChEBI" id="CHEBI:45075"/>
        <dbReference type="ChEBI" id="CHEBI:57783"/>
        <dbReference type="ChEBI" id="CHEBI:58349"/>
        <dbReference type="ChEBI" id="CHEBI:58703"/>
        <dbReference type="EC" id="1.7.1.13"/>
    </reaction>
</comment>
<comment type="pathway">
    <text evidence="1">tRNA modification; tRNA-queuosine biosynthesis.</text>
</comment>
<comment type="subcellular location">
    <subcellularLocation>
        <location evidence="1">Cytoplasm</location>
    </subcellularLocation>
</comment>
<comment type="similarity">
    <text evidence="1">Belongs to the GTP cyclohydrolase I family. QueF type 1 subfamily.</text>
</comment>
<comment type="sequence caution" evidence="2">
    <conflict type="erroneous initiation">
        <sequence resource="EMBL-CDS" id="AAV60504"/>
    </conflict>
</comment>
<keyword id="KW-0963">Cytoplasm</keyword>
<keyword id="KW-0521">NADP</keyword>
<keyword id="KW-0560">Oxidoreductase</keyword>
<keyword id="KW-0671">Queuosine biosynthesis</keyword>
<keyword id="KW-1185">Reference proteome</keyword>
<dbReference type="EC" id="1.7.1.13" evidence="1"/>
<dbReference type="EMBL" id="CP000023">
    <property type="protein sequence ID" value="AAV60504.1"/>
    <property type="status" value="ALT_INIT"/>
    <property type="molecule type" value="Genomic_DNA"/>
</dbReference>
<dbReference type="RefSeq" id="WP_002946191.1">
    <property type="nucleotide sequence ID" value="NC_006448.1"/>
</dbReference>
<dbReference type="SMR" id="Q5M4S2"/>
<dbReference type="STRING" id="264199.stu0828"/>
<dbReference type="GeneID" id="66898714"/>
<dbReference type="KEGG" id="stl:stu0828"/>
<dbReference type="eggNOG" id="COG0780">
    <property type="taxonomic scope" value="Bacteria"/>
</dbReference>
<dbReference type="HOGENOM" id="CLU_102489_0_1_9"/>
<dbReference type="UniPathway" id="UPA00392"/>
<dbReference type="Proteomes" id="UP000001170">
    <property type="component" value="Chromosome"/>
</dbReference>
<dbReference type="GO" id="GO:0005737">
    <property type="term" value="C:cytoplasm"/>
    <property type="evidence" value="ECO:0007669"/>
    <property type="project" value="UniProtKB-SubCell"/>
</dbReference>
<dbReference type="GO" id="GO:0033739">
    <property type="term" value="F:preQ1 synthase activity"/>
    <property type="evidence" value="ECO:0007669"/>
    <property type="project" value="UniProtKB-UniRule"/>
</dbReference>
<dbReference type="GO" id="GO:0008616">
    <property type="term" value="P:queuosine biosynthetic process"/>
    <property type="evidence" value="ECO:0007669"/>
    <property type="project" value="UniProtKB-UniRule"/>
</dbReference>
<dbReference type="GO" id="GO:0006400">
    <property type="term" value="P:tRNA modification"/>
    <property type="evidence" value="ECO:0007669"/>
    <property type="project" value="UniProtKB-UniRule"/>
</dbReference>
<dbReference type="Gene3D" id="3.30.1130.10">
    <property type="match status" value="1"/>
</dbReference>
<dbReference type="HAMAP" id="MF_00818">
    <property type="entry name" value="QueF_type1"/>
    <property type="match status" value="1"/>
</dbReference>
<dbReference type="InterPro" id="IPR043133">
    <property type="entry name" value="GTP-CH-I_C/QueF"/>
</dbReference>
<dbReference type="InterPro" id="IPR050084">
    <property type="entry name" value="NADPH_dep_7-cyano-7-deazaG_red"/>
</dbReference>
<dbReference type="InterPro" id="IPR029500">
    <property type="entry name" value="QueF"/>
</dbReference>
<dbReference type="InterPro" id="IPR016856">
    <property type="entry name" value="QueF_type1"/>
</dbReference>
<dbReference type="NCBIfam" id="TIGR03139">
    <property type="entry name" value="QueF-II"/>
    <property type="match status" value="1"/>
</dbReference>
<dbReference type="PANTHER" id="PTHR34354">
    <property type="entry name" value="NADPH-DEPENDENT 7-CYANO-7-DEAZAGUANINE REDUCTASE"/>
    <property type="match status" value="1"/>
</dbReference>
<dbReference type="PANTHER" id="PTHR34354:SF1">
    <property type="entry name" value="NADPH-DEPENDENT 7-CYANO-7-DEAZAGUANINE REDUCTASE"/>
    <property type="match status" value="1"/>
</dbReference>
<dbReference type="Pfam" id="PF14489">
    <property type="entry name" value="QueF"/>
    <property type="match status" value="1"/>
</dbReference>
<dbReference type="PIRSF" id="PIRSF027377">
    <property type="entry name" value="Nitrile_oxidored_QueF"/>
    <property type="match status" value="1"/>
</dbReference>
<dbReference type="SUPFAM" id="SSF55620">
    <property type="entry name" value="Tetrahydrobiopterin biosynthesis enzymes-like"/>
    <property type="match status" value="1"/>
</dbReference>
<name>QUEF_STRT2</name>
<feature type="chain" id="PRO_0000163007" description="NADPH-dependent 7-cyano-7-deazaguanine reductase">
    <location>
        <begin position="1"/>
        <end position="163"/>
    </location>
</feature>
<feature type="active site" description="Thioimide intermediate" evidence="1">
    <location>
        <position position="54"/>
    </location>
</feature>
<feature type="active site" description="Proton donor" evidence="1">
    <location>
        <position position="61"/>
    </location>
</feature>
<feature type="binding site" evidence="1">
    <location>
        <begin position="76"/>
        <end position="78"/>
    </location>
    <ligand>
        <name>substrate</name>
    </ligand>
</feature>
<feature type="binding site" evidence="1">
    <location>
        <begin position="95"/>
        <end position="96"/>
    </location>
    <ligand>
        <name>substrate</name>
    </ligand>
</feature>
<organism>
    <name type="scientific">Streptococcus thermophilus (strain ATCC BAA-250 / LMG 18311)</name>
    <dbReference type="NCBI Taxonomy" id="264199"/>
    <lineage>
        <taxon>Bacteria</taxon>
        <taxon>Bacillati</taxon>
        <taxon>Bacillota</taxon>
        <taxon>Bacilli</taxon>
        <taxon>Lactobacillales</taxon>
        <taxon>Streptococcaceae</taxon>
        <taxon>Streptococcus</taxon>
    </lineage>
</organism>
<proteinExistence type="inferred from homology"/>
<evidence type="ECO:0000255" key="1">
    <source>
        <dbReference type="HAMAP-Rule" id="MF_00818"/>
    </source>
</evidence>
<evidence type="ECO:0000305" key="2"/>
<gene>
    <name evidence="1" type="primary">queF</name>
    <name type="ordered locus">stu0828</name>
</gene>
<reference key="1">
    <citation type="journal article" date="2004" name="Nat. Biotechnol.">
        <title>Complete sequence and comparative genome analysis of the dairy bacterium Streptococcus thermophilus.</title>
        <authorList>
            <person name="Bolotin A."/>
            <person name="Quinquis B."/>
            <person name="Renault P."/>
            <person name="Sorokin A."/>
            <person name="Ehrlich S.D."/>
            <person name="Kulakauskas S."/>
            <person name="Lapidus A."/>
            <person name="Goltsman E."/>
            <person name="Mazur M."/>
            <person name="Pusch G.D."/>
            <person name="Fonstein M."/>
            <person name="Overbeek R."/>
            <person name="Kyprides N."/>
            <person name="Purnelle B."/>
            <person name="Prozzi D."/>
            <person name="Ngui K."/>
            <person name="Masuy D."/>
            <person name="Hancy F."/>
            <person name="Burteau S."/>
            <person name="Boutry M."/>
            <person name="Delcour J."/>
            <person name="Goffeau A."/>
            <person name="Hols P."/>
        </authorList>
    </citation>
    <scope>NUCLEOTIDE SEQUENCE [LARGE SCALE GENOMIC DNA]</scope>
    <source>
        <strain>ATCC BAA-250 / LMG 18311</strain>
    </source>
</reference>